<keyword id="KW-0408">Iron</keyword>
<keyword id="KW-0479">Metal-binding</keyword>
<evidence type="ECO:0000255" key="1">
    <source>
        <dbReference type="HAMAP-Rule" id="MF_00142"/>
    </source>
</evidence>
<organism>
    <name type="scientific">Pseudomonas fluorescens (strain SBW25)</name>
    <dbReference type="NCBI Taxonomy" id="216595"/>
    <lineage>
        <taxon>Bacteria</taxon>
        <taxon>Pseudomonadati</taxon>
        <taxon>Pseudomonadota</taxon>
        <taxon>Gammaproteobacteria</taxon>
        <taxon>Pseudomonadales</taxon>
        <taxon>Pseudomonadaceae</taxon>
        <taxon>Pseudomonas</taxon>
    </lineage>
</organism>
<sequence length="110" mass="12450">MSLTEARFHDLVDSTQQALEDIFDDSGLDVDLENSAGVLTVKFESGQQLIFSRQEPLRQLWLAARSGGVHFDYDEESGKWQCDKSEELLSEMLARLVSEYTGADLDFDEI</sequence>
<reference key="1">
    <citation type="journal article" date="2009" name="Genome Biol.">
        <title>Genomic and genetic analyses of diversity and plant interactions of Pseudomonas fluorescens.</title>
        <authorList>
            <person name="Silby M.W."/>
            <person name="Cerdeno-Tarraga A.M."/>
            <person name="Vernikos G.S."/>
            <person name="Giddens S.R."/>
            <person name="Jackson R.W."/>
            <person name="Preston G.M."/>
            <person name="Zhang X.-X."/>
            <person name="Moon C.D."/>
            <person name="Gehrig S.M."/>
            <person name="Godfrey S.A.C."/>
            <person name="Knight C.G."/>
            <person name="Malone J.G."/>
            <person name="Robinson Z."/>
            <person name="Spiers A.J."/>
            <person name="Harris S."/>
            <person name="Challis G.L."/>
            <person name="Yaxley A.M."/>
            <person name="Harris D."/>
            <person name="Seeger K."/>
            <person name="Murphy L."/>
            <person name="Rutter S."/>
            <person name="Squares R."/>
            <person name="Quail M.A."/>
            <person name="Saunders E."/>
            <person name="Mavromatis K."/>
            <person name="Brettin T.S."/>
            <person name="Bentley S.D."/>
            <person name="Hothersall J."/>
            <person name="Stephens E."/>
            <person name="Thomas C.M."/>
            <person name="Parkhill J."/>
            <person name="Levy S.B."/>
            <person name="Rainey P.B."/>
            <person name="Thomson N.R."/>
        </authorList>
    </citation>
    <scope>NUCLEOTIDE SEQUENCE [LARGE SCALE GENOMIC DNA]</scope>
    <source>
        <strain>SBW25</strain>
    </source>
</reference>
<proteinExistence type="inferred from homology"/>
<gene>
    <name evidence="1" type="primary">cyaY</name>
    <name type="ordered locus">PFLU_5943</name>
</gene>
<feature type="chain" id="PRO_1000203288" description="Iron-sulfur cluster assembly protein CyaY">
    <location>
        <begin position="1"/>
        <end position="110"/>
    </location>
</feature>
<accession>C3K433</accession>
<name>CYAY_PSEFS</name>
<protein>
    <recommendedName>
        <fullName evidence="1">Iron-sulfur cluster assembly protein CyaY</fullName>
    </recommendedName>
</protein>
<comment type="function">
    <text evidence="1">Involved in iron-sulfur (Fe-S) cluster assembly. May act as a regulator of Fe-S biogenesis.</text>
</comment>
<comment type="similarity">
    <text evidence="1">Belongs to the frataxin family.</text>
</comment>
<dbReference type="EMBL" id="AM181176">
    <property type="protein sequence ID" value="CAY53440.1"/>
    <property type="molecule type" value="Genomic_DNA"/>
</dbReference>
<dbReference type="RefSeq" id="WP_015886499.1">
    <property type="nucleotide sequence ID" value="NC_012660.1"/>
</dbReference>
<dbReference type="SMR" id="C3K433"/>
<dbReference type="STRING" id="294.SRM1_05634"/>
<dbReference type="GeneID" id="93467572"/>
<dbReference type="eggNOG" id="COG1965">
    <property type="taxonomic scope" value="Bacteria"/>
</dbReference>
<dbReference type="HOGENOM" id="CLU_080880_3_0_6"/>
<dbReference type="OrthoDB" id="285675at2"/>
<dbReference type="GO" id="GO:0005829">
    <property type="term" value="C:cytosol"/>
    <property type="evidence" value="ECO:0007669"/>
    <property type="project" value="TreeGrafter"/>
</dbReference>
<dbReference type="GO" id="GO:0008199">
    <property type="term" value="F:ferric iron binding"/>
    <property type="evidence" value="ECO:0007669"/>
    <property type="project" value="InterPro"/>
</dbReference>
<dbReference type="GO" id="GO:0008198">
    <property type="term" value="F:ferrous iron binding"/>
    <property type="evidence" value="ECO:0007669"/>
    <property type="project" value="TreeGrafter"/>
</dbReference>
<dbReference type="GO" id="GO:0016226">
    <property type="term" value="P:iron-sulfur cluster assembly"/>
    <property type="evidence" value="ECO:0007669"/>
    <property type="project" value="UniProtKB-UniRule"/>
</dbReference>
<dbReference type="Gene3D" id="3.30.920.10">
    <property type="entry name" value="Frataxin/CyaY"/>
    <property type="match status" value="1"/>
</dbReference>
<dbReference type="HAMAP" id="MF_00142">
    <property type="entry name" value="CyaY"/>
    <property type="match status" value="1"/>
</dbReference>
<dbReference type="InterPro" id="IPR047584">
    <property type="entry name" value="CyaY"/>
</dbReference>
<dbReference type="InterPro" id="IPR002908">
    <property type="entry name" value="Frataxin/CyaY"/>
</dbReference>
<dbReference type="InterPro" id="IPR036524">
    <property type="entry name" value="Frataxin/CyaY_sf"/>
</dbReference>
<dbReference type="InterPro" id="IPR020895">
    <property type="entry name" value="Frataxin_CS"/>
</dbReference>
<dbReference type="NCBIfam" id="TIGR03421">
    <property type="entry name" value="FeS_CyaY"/>
    <property type="match status" value="1"/>
</dbReference>
<dbReference type="PANTHER" id="PTHR16821">
    <property type="entry name" value="FRATAXIN"/>
    <property type="match status" value="1"/>
</dbReference>
<dbReference type="PANTHER" id="PTHR16821:SF2">
    <property type="entry name" value="FRATAXIN, MITOCHONDRIAL"/>
    <property type="match status" value="1"/>
</dbReference>
<dbReference type="Pfam" id="PF01491">
    <property type="entry name" value="Frataxin_Cyay"/>
    <property type="match status" value="1"/>
</dbReference>
<dbReference type="SMART" id="SM01219">
    <property type="entry name" value="Frataxin_Cyay"/>
    <property type="match status" value="1"/>
</dbReference>
<dbReference type="SUPFAM" id="SSF55387">
    <property type="entry name" value="Frataxin/Nqo15-like"/>
    <property type="match status" value="1"/>
</dbReference>
<dbReference type="PROSITE" id="PS01344">
    <property type="entry name" value="FRATAXIN_1"/>
    <property type="match status" value="1"/>
</dbReference>
<dbReference type="PROSITE" id="PS50810">
    <property type="entry name" value="FRATAXIN_2"/>
    <property type="match status" value="1"/>
</dbReference>